<evidence type="ECO:0000250" key="1"/>
<evidence type="ECO:0000255" key="2"/>
<evidence type="ECO:0000305" key="3"/>
<reference key="1">
    <citation type="journal article" date="2005" name="Proteins">
        <title>A novel strategy for the identification of toxinlike structures in spider venom.</title>
        <authorList>
            <person name="Kozlov S.A."/>
            <person name="Malyavka A."/>
            <person name="McCutchen B."/>
            <person name="Lu A."/>
            <person name="Schepers E."/>
            <person name="Herrmann R."/>
            <person name="Grishin E.V."/>
        </authorList>
    </citation>
    <scope>NUCLEOTIDE SEQUENCE [MRNA]</scope>
    <source>
        <tissue>Venom gland</tissue>
    </source>
</reference>
<protein>
    <recommendedName>
        <fullName>U2-agatoxin-Ao1s</fullName>
        <shortName>U2-AGTX-Ao1s</shortName>
    </recommendedName>
    <alternativeName>
        <fullName>Agel_18</fullName>
    </alternativeName>
</protein>
<name>TA2GS_AGEOR</name>
<proteinExistence type="evidence at transcript level"/>
<keyword id="KW-1015">Disulfide bond</keyword>
<keyword id="KW-0960">Knottin</keyword>
<keyword id="KW-0528">Neurotoxin</keyword>
<keyword id="KW-0964">Secreted</keyword>
<keyword id="KW-0800">Toxin</keyword>
<sequence>KKVYSFLKLKGCLPRNRFCNALSGPRCCSGLRCKELSIWASKCL</sequence>
<feature type="propeptide" id="PRO_0000393359" evidence="2">
    <location>
        <begin position="1" status="less than"/>
        <end position="9"/>
    </location>
</feature>
<feature type="chain" id="PRO_0000393360" description="U2-agatoxin-Ao1s">
    <location>
        <begin position="10"/>
        <end position="44"/>
    </location>
</feature>
<feature type="disulfide bond" evidence="1">
    <location>
        <begin position="12"/>
        <end position="28"/>
    </location>
</feature>
<feature type="disulfide bond" evidence="1">
    <location>
        <begin position="19"/>
        <end position="33"/>
    </location>
</feature>
<feature type="disulfide bond" evidence="1">
    <location>
        <begin position="27"/>
        <end position="43"/>
    </location>
</feature>
<feature type="non-terminal residue">
    <location>
        <position position="1"/>
    </location>
</feature>
<dbReference type="SMR" id="P0CF14"/>
<dbReference type="ArachnoServer" id="AS000771">
    <property type="toxin name" value="U2-agatoxin-Ao1s"/>
</dbReference>
<dbReference type="GO" id="GO:0005576">
    <property type="term" value="C:extracellular region"/>
    <property type="evidence" value="ECO:0007669"/>
    <property type="project" value="UniProtKB-SubCell"/>
</dbReference>
<dbReference type="GO" id="GO:0090729">
    <property type="term" value="F:toxin activity"/>
    <property type="evidence" value="ECO:0007669"/>
    <property type="project" value="UniProtKB-KW"/>
</dbReference>
<dbReference type="Pfam" id="PF05980">
    <property type="entry name" value="Toxin_7"/>
    <property type="match status" value="1"/>
</dbReference>
<dbReference type="SUPFAM" id="SSF57059">
    <property type="entry name" value="omega toxin-like"/>
    <property type="match status" value="1"/>
</dbReference>
<comment type="function">
    <text evidence="1">Insect active toxin causing rapid but reversible paralysis in crickets. No activity shown in mammals. Does not show effect on mammalian voltage-gated calcium channels (By similarity).</text>
</comment>
<comment type="subcellular location">
    <subcellularLocation>
        <location evidence="1">Secreted</location>
    </subcellularLocation>
</comment>
<comment type="tissue specificity">
    <text>Expressed by the venom gland.</text>
</comment>
<comment type="domain">
    <text evidence="1">The presence of a 'disulfide through disulfide knot' structurally defines this protein as a knottin.</text>
</comment>
<comment type="similarity">
    <text evidence="3">Belongs to the neurotoxin 01 (U2-agtx) family.</text>
</comment>
<organism>
    <name type="scientific">Agelena orientalis</name>
    <name type="common">Funnel-web spider</name>
    <dbReference type="NCBI Taxonomy" id="293813"/>
    <lineage>
        <taxon>Eukaryota</taxon>
        <taxon>Metazoa</taxon>
        <taxon>Ecdysozoa</taxon>
        <taxon>Arthropoda</taxon>
        <taxon>Chelicerata</taxon>
        <taxon>Arachnida</taxon>
        <taxon>Araneae</taxon>
        <taxon>Araneomorphae</taxon>
        <taxon>Entelegynae</taxon>
        <taxon>Agelenidae</taxon>
        <taxon>Agelena</taxon>
    </lineage>
</organism>
<accession>P0CF14</accession>